<comment type="function">
    <text evidence="2">One of the components of the core complex of photosystem II (PSII), required for its stability and/or assembly. PSII is a light-driven water:plastoquinone oxidoreductase that uses light energy to abstract electrons from H(2)O, generating O(2) and a proton gradient subsequently used for ATP formation. It consists of a core antenna complex that captures photons, and an electron transfer chain that converts photonic excitation into a charge separation.</text>
</comment>
<comment type="subunit">
    <text evidence="2">PSII is composed of 1 copy each of membrane proteins PsbA, PsbB, PsbC, PsbD, PsbE, PsbF, PsbH, PsbI, PsbJ, PsbK, PsbL, PsbM, PsbT, PsbX, PsbY, PsbZ, Psb30/Ycf12, at least 3 peripheral proteins of the oxygen-evolving complex and a large number of cofactors. It forms dimeric complexes.</text>
</comment>
<comment type="subcellular location">
    <subcellularLocation>
        <location evidence="2">Plastid</location>
        <location evidence="2">Chloroplast thylakoid membrane</location>
        <topology evidence="2">Single-pass membrane protein</topology>
    </subcellularLocation>
</comment>
<comment type="PTM">
    <text evidence="2">Phosphorylation is a light-dependent reaction catalyzed by a membrane-bound kinase; phosphorylation occurs on Thr residue(s) in the N-terminus of the protein.</text>
</comment>
<comment type="similarity">
    <text evidence="2">Belongs to the PsbH family.</text>
</comment>
<evidence type="ECO:0000250" key="1">
    <source>
        <dbReference type="UniProtKB" id="P56780"/>
    </source>
</evidence>
<evidence type="ECO:0000255" key="2">
    <source>
        <dbReference type="HAMAP-Rule" id="MF_00752"/>
    </source>
</evidence>
<feature type="initiator methionine" description="Removed" evidence="1">
    <location>
        <position position="1"/>
    </location>
</feature>
<feature type="chain" id="PRO_0000070503" description="Photosystem II reaction center protein H">
    <location>
        <begin position="2"/>
        <end position="80"/>
    </location>
</feature>
<feature type="transmembrane region" description="Helical" evidence="2">
    <location>
        <begin position="42"/>
        <end position="62"/>
    </location>
</feature>
<feature type="modified residue" description="Phosphothreonine" evidence="2">
    <location>
        <position position="6"/>
    </location>
</feature>
<proteinExistence type="inferred from homology"/>
<accession>P56323</accession>
<reference key="1">
    <citation type="journal article" date="1997" name="Proc. Natl. Acad. Sci. U.S.A.">
        <title>Complete nucleotide sequence of the chloroplast genome from the green alga Chlorella vulgaris: the existence of genes possibly involved in chloroplast division.</title>
        <authorList>
            <person name="Wakasugi T."/>
            <person name="Nagai T."/>
            <person name="Kapoor M."/>
            <person name="Sugita M."/>
            <person name="Ito M."/>
            <person name="Ito S."/>
            <person name="Tsudzuki J."/>
            <person name="Nakashima K."/>
            <person name="Tsudzuki T."/>
            <person name="Suzuki Y."/>
            <person name="Hamada A."/>
            <person name="Ohta T."/>
            <person name="Inamura A."/>
            <person name="Yoshinaga K."/>
            <person name="Sugiura M."/>
        </authorList>
    </citation>
    <scope>NUCLEOTIDE SEQUENCE [LARGE SCALE GENOMIC DNA]</scope>
    <source>
        <strain>IAM C-27 / Tamiya</strain>
    </source>
</reference>
<geneLocation type="chloroplast"/>
<keyword id="KW-0150">Chloroplast</keyword>
<keyword id="KW-0472">Membrane</keyword>
<keyword id="KW-0597">Phosphoprotein</keyword>
<keyword id="KW-0602">Photosynthesis</keyword>
<keyword id="KW-0604">Photosystem II</keyword>
<keyword id="KW-0934">Plastid</keyword>
<keyword id="KW-0793">Thylakoid</keyword>
<keyword id="KW-0812">Transmembrane</keyword>
<keyword id="KW-1133">Transmembrane helix</keyword>
<name>PSBH_CHLVU</name>
<protein>
    <recommendedName>
        <fullName evidence="2">Photosystem II reaction center protein H</fullName>
        <shortName evidence="2">PSII-H</shortName>
    </recommendedName>
    <alternativeName>
        <fullName evidence="2">Photosystem II 10 kDa phosphoprotein</fullName>
    </alternativeName>
</protein>
<organism>
    <name type="scientific">Chlorella vulgaris</name>
    <name type="common">Green alga</name>
    <dbReference type="NCBI Taxonomy" id="3077"/>
    <lineage>
        <taxon>Eukaryota</taxon>
        <taxon>Viridiplantae</taxon>
        <taxon>Chlorophyta</taxon>
        <taxon>core chlorophytes</taxon>
        <taxon>Trebouxiophyceae</taxon>
        <taxon>Chlorellales</taxon>
        <taxon>Chlorellaceae</taxon>
        <taxon>Chlorella clade</taxon>
        <taxon>Chlorella</taxon>
    </lineage>
</organism>
<dbReference type="EMBL" id="AB001684">
    <property type="protein sequence ID" value="BAA57921.1"/>
    <property type="molecule type" value="Genomic_DNA"/>
</dbReference>
<dbReference type="PIR" id="T07273">
    <property type="entry name" value="T07273"/>
</dbReference>
<dbReference type="RefSeq" id="NP_045845.1">
    <property type="nucleotide sequence ID" value="NC_001865.1"/>
</dbReference>
<dbReference type="SMR" id="P56323"/>
<dbReference type="GeneID" id="809198"/>
<dbReference type="OrthoDB" id="564838at2759"/>
<dbReference type="GO" id="GO:0009535">
    <property type="term" value="C:chloroplast thylakoid membrane"/>
    <property type="evidence" value="ECO:0007669"/>
    <property type="project" value="UniProtKB-SubCell"/>
</dbReference>
<dbReference type="GO" id="GO:0009523">
    <property type="term" value="C:photosystem II"/>
    <property type="evidence" value="ECO:0007669"/>
    <property type="project" value="UniProtKB-KW"/>
</dbReference>
<dbReference type="GO" id="GO:0042301">
    <property type="term" value="F:phosphate ion binding"/>
    <property type="evidence" value="ECO:0007669"/>
    <property type="project" value="InterPro"/>
</dbReference>
<dbReference type="GO" id="GO:0015979">
    <property type="term" value="P:photosynthesis"/>
    <property type="evidence" value="ECO:0007669"/>
    <property type="project" value="UniProtKB-UniRule"/>
</dbReference>
<dbReference type="GO" id="GO:0050821">
    <property type="term" value="P:protein stabilization"/>
    <property type="evidence" value="ECO:0007669"/>
    <property type="project" value="InterPro"/>
</dbReference>
<dbReference type="Gene3D" id="1.20.5.880">
    <property type="entry name" value="Photosystem II reaction center protein H"/>
    <property type="match status" value="1"/>
</dbReference>
<dbReference type="HAMAP" id="MF_00752">
    <property type="entry name" value="PSII_PsbH"/>
    <property type="match status" value="1"/>
</dbReference>
<dbReference type="InterPro" id="IPR001056">
    <property type="entry name" value="PSII_PsbH"/>
</dbReference>
<dbReference type="InterPro" id="IPR036863">
    <property type="entry name" value="PSII_PsbH_sf"/>
</dbReference>
<dbReference type="NCBIfam" id="NF002728">
    <property type="entry name" value="PRK02624.1"/>
    <property type="match status" value="1"/>
</dbReference>
<dbReference type="PANTHER" id="PTHR34469">
    <property type="entry name" value="PHOTOSYSTEM II REACTION CENTER PROTEIN H"/>
    <property type="match status" value="1"/>
</dbReference>
<dbReference type="PANTHER" id="PTHR34469:SF4">
    <property type="entry name" value="PHOTOSYSTEM II REACTION CENTER PROTEIN H"/>
    <property type="match status" value="1"/>
</dbReference>
<dbReference type="Pfam" id="PF00737">
    <property type="entry name" value="PsbH"/>
    <property type="match status" value="1"/>
</dbReference>
<dbReference type="SUPFAM" id="SSF161025">
    <property type="entry name" value="Photosystem II 10 kDa phosphoprotein PsbH"/>
    <property type="match status" value="1"/>
</dbReference>
<gene>
    <name evidence="2" type="primary">psbH</name>
</gene>
<sequence length="80" mass="8543">MATGTTSKVKVSDTGVSTPLGTLLKPLNSEYGKVAPGWGTTVLMGIFMALFAVFLVIILEIYNSSVLLDDVTMSWESLSK</sequence>